<proteinExistence type="evidence at protein level"/>
<dbReference type="PIR" id="A00055">
    <property type="entry name" value="CCBX"/>
</dbReference>
<dbReference type="SMR" id="P00063"/>
<dbReference type="iPTMnet" id="P00063"/>
<dbReference type="GO" id="GO:0005758">
    <property type="term" value="C:mitochondrial intermembrane space"/>
    <property type="evidence" value="ECO:0007669"/>
    <property type="project" value="UniProtKB-SubCell"/>
</dbReference>
<dbReference type="GO" id="GO:0009055">
    <property type="term" value="F:electron transfer activity"/>
    <property type="evidence" value="ECO:0007669"/>
    <property type="project" value="InterPro"/>
</dbReference>
<dbReference type="GO" id="GO:0020037">
    <property type="term" value="F:heme binding"/>
    <property type="evidence" value="ECO:0007669"/>
    <property type="project" value="InterPro"/>
</dbReference>
<dbReference type="GO" id="GO:0046872">
    <property type="term" value="F:metal ion binding"/>
    <property type="evidence" value="ECO:0007669"/>
    <property type="project" value="UniProtKB-KW"/>
</dbReference>
<dbReference type="FunFam" id="1.10.760.10:FF:000001">
    <property type="entry name" value="Cytochrome c iso-1"/>
    <property type="match status" value="1"/>
</dbReference>
<dbReference type="Gene3D" id="1.10.760.10">
    <property type="entry name" value="Cytochrome c-like domain"/>
    <property type="match status" value="1"/>
</dbReference>
<dbReference type="InterPro" id="IPR009056">
    <property type="entry name" value="Cyt_c-like_dom"/>
</dbReference>
<dbReference type="InterPro" id="IPR036909">
    <property type="entry name" value="Cyt_c-like_dom_sf"/>
</dbReference>
<dbReference type="InterPro" id="IPR002327">
    <property type="entry name" value="Cyt_c_1A/1B"/>
</dbReference>
<dbReference type="PANTHER" id="PTHR11961">
    <property type="entry name" value="CYTOCHROME C"/>
    <property type="match status" value="1"/>
</dbReference>
<dbReference type="Pfam" id="PF00034">
    <property type="entry name" value="Cytochrom_C"/>
    <property type="match status" value="1"/>
</dbReference>
<dbReference type="PRINTS" id="PR00604">
    <property type="entry name" value="CYTCHRMECIAB"/>
</dbReference>
<dbReference type="SUPFAM" id="SSF46626">
    <property type="entry name" value="Cytochrome c"/>
    <property type="match status" value="1"/>
</dbReference>
<dbReference type="PROSITE" id="PS51007">
    <property type="entry name" value="CYTC"/>
    <property type="match status" value="1"/>
</dbReference>
<sequence>ASFAEAPPGNPAAGEKIFKTKCAQCHTVDKGAGHKQGPNLNGLFGRQSGTTAGYSYSAANKNMAVNWGYNTLYDYLLNPKKYIPGTKMVFPGLKKPQDRADLIAYLKQSTAA</sequence>
<accession>P00063</accession>
<comment type="function">
    <text>Electron carrier protein. The oxidized form of the cytochrome c heme group can accept an electron from the heme group of the cytochrome c1 subunit of cytochrome reductase. Cytochrome c then transfers this electron to the cytochrome oxidase complex, the final protein carrier in the mitochondrial electron-transport chain.</text>
</comment>
<comment type="subcellular location">
    <subcellularLocation>
        <location>Mitochondrion intermembrane space</location>
    </subcellularLocation>
    <text>Loosely associated with the inner membrane.</text>
</comment>
<comment type="PTM">
    <text>Binds 1 heme c group covalently per subunit.</text>
</comment>
<comment type="similarity">
    <text evidence="2">Belongs to the cytochrome c family.</text>
</comment>
<comment type="online information" name="Protein Spotlight">
    <link uri="https://www.proteinspotlight.org/back_issues/076"/>
    <text>Life shuttle - Issue 76 of November 2006</text>
</comment>
<reference key="1">
    <citation type="journal article" date="1974" name="Biochem. J.">
        <title>The amino acid sequences of cytochrome c from four plant sources.</title>
        <authorList>
            <person name="Brown R.H."/>
            <person name="Boulter D."/>
        </authorList>
    </citation>
    <scope>PROTEIN SEQUENCE</scope>
    <scope>ACETYLATION AT ALA-1</scope>
    <scope>METHYLATION AT LYS-80 AND LYS-94</scope>
</reference>
<organism>
    <name type="scientific">Acer negundo</name>
    <name type="common">Box elder</name>
    <dbReference type="NCBI Taxonomy" id="4023"/>
    <lineage>
        <taxon>Eukaryota</taxon>
        <taxon>Viridiplantae</taxon>
        <taxon>Streptophyta</taxon>
        <taxon>Embryophyta</taxon>
        <taxon>Tracheophyta</taxon>
        <taxon>Spermatophyta</taxon>
        <taxon>Magnoliopsida</taxon>
        <taxon>eudicotyledons</taxon>
        <taxon>Gunneridae</taxon>
        <taxon>Pentapetalae</taxon>
        <taxon>rosids</taxon>
        <taxon>malvids</taxon>
        <taxon>Sapindales</taxon>
        <taxon>Sapindaceae</taxon>
        <taxon>Hippocastanoideae</taxon>
        <taxon>Acereae</taxon>
        <taxon>Acer</taxon>
    </lineage>
</organism>
<feature type="chain" id="PRO_0000108282" description="Cytochrome c">
    <location>
        <begin position="1"/>
        <end position="112"/>
    </location>
</feature>
<feature type="binding site" description="covalent">
    <location>
        <position position="22"/>
    </location>
    <ligand>
        <name>heme c</name>
        <dbReference type="ChEBI" id="CHEBI:61717"/>
    </ligand>
</feature>
<feature type="binding site" description="covalent">
    <location>
        <position position="25"/>
    </location>
    <ligand>
        <name>heme c</name>
        <dbReference type="ChEBI" id="CHEBI:61717"/>
    </ligand>
</feature>
<feature type="binding site" description="axial binding residue">
    <location>
        <position position="26"/>
    </location>
    <ligand>
        <name>heme c</name>
        <dbReference type="ChEBI" id="CHEBI:61717"/>
    </ligand>
    <ligandPart>
        <name>Fe</name>
        <dbReference type="ChEBI" id="CHEBI:18248"/>
    </ligandPart>
</feature>
<feature type="binding site" description="axial binding residue">
    <location>
        <position position="88"/>
    </location>
    <ligand>
        <name>heme c</name>
        <dbReference type="ChEBI" id="CHEBI:61717"/>
    </ligand>
    <ligandPart>
        <name>Fe</name>
        <dbReference type="ChEBI" id="CHEBI:18248"/>
    </ligandPart>
</feature>
<feature type="modified residue" description="N-acetylalanine" evidence="1">
    <location>
        <position position="1"/>
    </location>
</feature>
<feature type="modified residue" description="N6,N6,N6-trimethyllysine" evidence="1">
    <location>
        <position position="80"/>
    </location>
</feature>
<feature type="modified residue" description="N6,N6,N6-trimethyllysine" evidence="1">
    <location>
        <position position="94"/>
    </location>
</feature>
<feature type="sequence variant" description="In 50% of the molecules.">
    <original>A</original>
    <variation>S</variation>
    <location>
        <position position="112"/>
    </location>
</feature>
<keyword id="KW-0007">Acetylation</keyword>
<keyword id="KW-0903">Direct protein sequencing</keyword>
<keyword id="KW-0249">Electron transport</keyword>
<keyword id="KW-0349">Heme</keyword>
<keyword id="KW-0408">Iron</keyword>
<keyword id="KW-0479">Metal-binding</keyword>
<keyword id="KW-0488">Methylation</keyword>
<keyword id="KW-0496">Mitochondrion</keyword>
<keyword id="KW-0679">Respiratory chain</keyword>
<keyword id="KW-0813">Transport</keyword>
<evidence type="ECO:0000269" key="1">
    <source>
    </source>
</evidence>
<evidence type="ECO:0000305" key="2"/>
<name>CYC_ACENE</name>
<protein>
    <recommendedName>
        <fullName>Cytochrome c</fullName>
    </recommendedName>
</protein>